<name>RIMP_ECOSM</name>
<protein>
    <recommendedName>
        <fullName evidence="1">Ribosome maturation factor RimP</fullName>
    </recommendedName>
</protein>
<gene>
    <name evidence="1" type="primary">rimP</name>
    <name type="ordered locus">EcSMS35_3466</name>
</gene>
<comment type="function">
    <text evidence="1">Required for maturation of 30S ribosomal subunits.</text>
</comment>
<comment type="subcellular location">
    <subcellularLocation>
        <location evidence="1">Cytoplasm</location>
    </subcellularLocation>
</comment>
<comment type="similarity">
    <text evidence="1">Belongs to the RimP family.</text>
</comment>
<comment type="sequence caution" evidence="2">
    <conflict type="erroneous initiation">
        <sequence resource="EMBL-CDS" id="ACB16719"/>
    </conflict>
</comment>
<proteinExistence type="inferred from homology"/>
<keyword id="KW-0963">Cytoplasm</keyword>
<keyword id="KW-0690">Ribosome biogenesis</keyword>
<dbReference type="EMBL" id="CP000970">
    <property type="protein sequence ID" value="ACB16719.1"/>
    <property type="status" value="ALT_INIT"/>
    <property type="molecule type" value="Genomic_DNA"/>
</dbReference>
<dbReference type="SMR" id="B1LFS2"/>
<dbReference type="KEGG" id="ecm:EcSMS35_3466"/>
<dbReference type="HOGENOM" id="CLU_070525_1_1_6"/>
<dbReference type="Proteomes" id="UP000007011">
    <property type="component" value="Chromosome"/>
</dbReference>
<dbReference type="GO" id="GO:0005829">
    <property type="term" value="C:cytosol"/>
    <property type="evidence" value="ECO:0007669"/>
    <property type="project" value="TreeGrafter"/>
</dbReference>
<dbReference type="GO" id="GO:0000028">
    <property type="term" value="P:ribosomal small subunit assembly"/>
    <property type="evidence" value="ECO:0007669"/>
    <property type="project" value="TreeGrafter"/>
</dbReference>
<dbReference type="GO" id="GO:0006412">
    <property type="term" value="P:translation"/>
    <property type="evidence" value="ECO:0007669"/>
    <property type="project" value="TreeGrafter"/>
</dbReference>
<dbReference type="CDD" id="cd01734">
    <property type="entry name" value="YlxS_C"/>
    <property type="match status" value="1"/>
</dbReference>
<dbReference type="FunFam" id="2.30.30.180:FF:000001">
    <property type="entry name" value="Ribosome maturation factor RimP"/>
    <property type="match status" value="1"/>
</dbReference>
<dbReference type="FunFam" id="3.30.300.70:FF:000001">
    <property type="entry name" value="Ribosome maturation factor RimP"/>
    <property type="match status" value="1"/>
</dbReference>
<dbReference type="Gene3D" id="2.30.30.180">
    <property type="entry name" value="Ribosome maturation factor RimP, C-terminal domain"/>
    <property type="match status" value="1"/>
</dbReference>
<dbReference type="Gene3D" id="3.30.300.70">
    <property type="entry name" value="RimP-like superfamily, N-terminal"/>
    <property type="match status" value="1"/>
</dbReference>
<dbReference type="HAMAP" id="MF_01077">
    <property type="entry name" value="RimP"/>
    <property type="match status" value="1"/>
</dbReference>
<dbReference type="InterPro" id="IPR003728">
    <property type="entry name" value="Ribosome_maturation_RimP"/>
</dbReference>
<dbReference type="InterPro" id="IPR028998">
    <property type="entry name" value="RimP_C"/>
</dbReference>
<dbReference type="InterPro" id="IPR036847">
    <property type="entry name" value="RimP_C_sf"/>
</dbReference>
<dbReference type="InterPro" id="IPR028989">
    <property type="entry name" value="RimP_N"/>
</dbReference>
<dbReference type="InterPro" id="IPR035956">
    <property type="entry name" value="RimP_N_sf"/>
</dbReference>
<dbReference type="NCBIfam" id="NF000927">
    <property type="entry name" value="PRK00092.1-1"/>
    <property type="match status" value="1"/>
</dbReference>
<dbReference type="PANTHER" id="PTHR33867">
    <property type="entry name" value="RIBOSOME MATURATION FACTOR RIMP"/>
    <property type="match status" value="1"/>
</dbReference>
<dbReference type="PANTHER" id="PTHR33867:SF1">
    <property type="entry name" value="RIBOSOME MATURATION FACTOR RIMP"/>
    <property type="match status" value="1"/>
</dbReference>
<dbReference type="Pfam" id="PF17384">
    <property type="entry name" value="DUF150_C"/>
    <property type="match status" value="1"/>
</dbReference>
<dbReference type="Pfam" id="PF02576">
    <property type="entry name" value="RimP_N"/>
    <property type="match status" value="1"/>
</dbReference>
<dbReference type="SUPFAM" id="SSF74942">
    <property type="entry name" value="YhbC-like, C-terminal domain"/>
    <property type="match status" value="1"/>
</dbReference>
<dbReference type="SUPFAM" id="SSF75420">
    <property type="entry name" value="YhbC-like, N-terminal domain"/>
    <property type="match status" value="1"/>
</dbReference>
<organism>
    <name type="scientific">Escherichia coli (strain SMS-3-5 / SECEC)</name>
    <dbReference type="NCBI Taxonomy" id="439855"/>
    <lineage>
        <taxon>Bacteria</taxon>
        <taxon>Pseudomonadati</taxon>
        <taxon>Pseudomonadota</taxon>
        <taxon>Gammaproteobacteria</taxon>
        <taxon>Enterobacterales</taxon>
        <taxon>Enterobacteriaceae</taxon>
        <taxon>Escherichia</taxon>
    </lineage>
</organism>
<accession>B1LFS2</accession>
<sequence>MGLSTLEQKLTEMITAPVEALGFELVGIEFIRGRTSTLRIYIDSEDGINVDDCADVSHQVSAVLDVEDPITVAYNLEVSSPGLDRPLFTAEHYARFVGEEVTLVLRMAVQNRRKWQGVIKAVDGEMITVTVEGKDEVFALSNIQKANLVPHF</sequence>
<reference key="1">
    <citation type="journal article" date="2008" name="J. Bacteriol.">
        <title>Insights into the environmental resistance gene pool from the genome sequence of the multidrug-resistant environmental isolate Escherichia coli SMS-3-5.</title>
        <authorList>
            <person name="Fricke W.F."/>
            <person name="Wright M.S."/>
            <person name="Lindell A.H."/>
            <person name="Harkins D.M."/>
            <person name="Baker-Austin C."/>
            <person name="Ravel J."/>
            <person name="Stepanauskas R."/>
        </authorList>
    </citation>
    <scope>NUCLEOTIDE SEQUENCE [LARGE SCALE GENOMIC DNA]</scope>
    <source>
        <strain>SMS-3-5 / SECEC</strain>
    </source>
</reference>
<feature type="chain" id="PRO_0000384654" description="Ribosome maturation factor RimP">
    <location>
        <begin position="1"/>
        <end position="152"/>
    </location>
</feature>
<evidence type="ECO:0000255" key="1">
    <source>
        <dbReference type="HAMAP-Rule" id="MF_01077"/>
    </source>
</evidence>
<evidence type="ECO:0000305" key="2"/>